<sequence>MNLLDYLPGVPDFPKPGILFRDISPLLANPAAFKETIAQLDALAKTFDYTHILGIESRGFIFGSALAHHAHKGFAIARKPNKLPLASHREQYGLEYGSDSLEIQQSTLPTNAKVLLIDDVLATGGTLIAADKLLRSAGFQVSGAITLLEIAVLNGSEQLEKNHIHHKSVLRS</sequence>
<evidence type="ECO:0000255" key="1">
    <source>
        <dbReference type="HAMAP-Rule" id="MF_00004"/>
    </source>
</evidence>
<keyword id="KW-0963">Cytoplasm</keyword>
<keyword id="KW-0328">Glycosyltransferase</keyword>
<keyword id="KW-0660">Purine salvage</keyword>
<keyword id="KW-1185">Reference proteome</keyword>
<keyword id="KW-0808">Transferase</keyword>
<dbReference type="EC" id="2.4.2.7" evidence="1"/>
<dbReference type="EMBL" id="CP000655">
    <property type="protein sequence ID" value="ABP34097.1"/>
    <property type="molecule type" value="Genomic_DNA"/>
</dbReference>
<dbReference type="RefSeq" id="WP_011902722.1">
    <property type="nucleotide sequence ID" value="NC_009379.1"/>
</dbReference>
<dbReference type="SMR" id="A4SX83"/>
<dbReference type="GeneID" id="31481245"/>
<dbReference type="KEGG" id="pnu:Pnuc_0881"/>
<dbReference type="eggNOG" id="COG0503">
    <property type="taxonomic scope" value="Bacteria"/>
</dbReference>
<dbReference type="HOGENOM" id="CLU_063339_3_3_4"/>
<dbReference type="UniPathway" id="UPA00588">
    <property type="reaction ID" value="UER00646"/>
</dbReference>
<dbReference type="Proteomes" id="UP000000231">
    <property type="component" value="Chromosome"/>
</dbReference>
<dbReference type="GO" id="GO:0005737">
    <property type="term" value="C:cytoplasm"/>
    <property type="evidence" value="ECO:0007669"/>
    <property type="project" value="UniProtKB-SubCell"/>
</dbReference>
<dbReference type="GO" id="GO:0002055">
    <property type="term" value="F:adenine binding"/>
    <property type="evidence" value="ECO:0007669"/>
    <property type="project" value="TreeGrafter"/>
</dbReference>
<dbReference type="GO" id="GO:0003999">
    <property type="term" value="F:adenine phosphoribosyltransferase activity"/>
    <property type="evidence" value="ECO:0007669"/>
    <property type="project" value="UniProtKB-UniRule"/>
</dbReference>
<dbReference type="GO" id="GO:0016208">
    <property type="term" value="F:AMP binding"/>
    <property type="evidence" value="ECO:0007669"/>
    <property type="project" value="TreeGrafter"/>
</dbReference>
<dbReference type="GO" id="GO:0006168">
    <property type="term" value="P:adenine salvage"/>
    <property type="evidence" value="ECO:0007669"/>
    <property type="project" value="InterPro"/>
</dbReference>
<dbReference type="GO" id="GO:0044209">
    <property type="term" value="P:AMP salvage"/>
    <property type="evidence" value="ECO:0007669"/>
    <property type="project" value="UniProtKB-UniRule"/>
</dbReference>
<dbReference type="GO" id="GO:0006166">
    <property type="term" value="P:purine ribonucleoside salvage"/>
    <property type="evidence" value="ECO:0007669"/>
    <property type="project" value="UniProtKB-KW"/>
</dbReference>
<dbReference type="CDD" id="cd06223">
    <property type="entry name" value="PRTases_typeI"/>
    <property type="match status" value="1"/>
</dbReference>
<dbReference type="FunFam" id="3.40.50.2020:FF:000004">
    <property type="entry name" value="Adenine phosphoribosyltransferase"/>
    <property type="match status" value="1"/>
</dbReference>
<dbReference type="Gene3D" id="3.40.50.2020">
    <property type="match status" value="1"/>
</dbReference>
<dbReference type="HAMAP" id="MF_00004">
    <property type="entry name" value="Aden_phosphoribosyltr"/>
    <property type="match status" value="1"/>
</dbReference>
<dbReference type="InterPro" id="IPR005764">
    <property type="entry name" value="Ade_phspho_trans"/>
</dbReference>
<dbReference type="InterPro" id="IPR000836">
    <property type="entry name" value="PRibTrfase_dom"/>
</dbReference>
<dbReference type="InterPro" id="IPR029057">
    <property type="entry name" value="PRTase-like"/>
</dbReference>
<dbReference type="InterPro" id="IPR050054">
    <property type="entry name" value="UPRTase/APRTase"/>
</dbReference>
<dbReference type="NCBIfam" id="NF002636">
    <property type="entry name" value="PRK02304.1-5"/>
    <property type="match status" value="1"/>
</dbReference>
<dbReference type="PANTHER" id="PTHR32315">
    <property type="entry name" value="ADENINE PHOSPHORIBOSYLTRANSFERASE"/>
    <property type="match status" value="1"/>
</dbReference>
<dbReference type="PANTHER" id="PTHR32315:SF3">
    <property type="entry name" value="ADENINE PHOSPHORIBOSYLTRANSFERASE"/>
    <property type="match status" value="1"/>
</dbReference>
<dbReference type="Pfam" id="PF00156">
    <property type="entry name" value="Pribosyltran"/>
    <property type="match status" value="1"/>
</dbReference>
<dbReference type="SUPFAM" id="SSF53271">
    <property type="entry name" value="PRTase-like"/>
    <property type="match status" value="1"/>
</dbReference>
<dbReference type="PROSITE" id="PS00103">
    <property type="entry name" value="PUR_PYR_PR_TRANSFER"/>
    <property type="match status" value="1"/>
</dbReference>
<reference key="1">
    <citation type="journal article" date="2012" name="Stand. Genomic Sci.">
        <title>Complete genome sequence of Polynucleobacter necessarius subsp. asymbioticus type strain (QLW-P1DMWA-1(T)).</title>
        <authorList>
            <person name="Meincke L."/>
            <person name="Copeland A."/>
            <person name="Lapidus A."/>
            <person name="Lucas S."/>
            <person name="Berry K.W."/>
            <person name="Del Rio T.G."/>
            <person name="Hammon N."/>
            <person name="Dalin E."/>
            <person name="Tice H."/>
            <person name="Pitluck S."/>
            <person name="Richardson P."/>
            <person name="Bruce D."/>
            <person name="Goodwin L."/>
            <person name="Han C."/>
            <person name="Tapia R."/>
            <person name="Detter J.C."/>
            <person name="Schmutz J."/>
            <person name="Brettin T."/>
            <person name="Larimer F."/>
            <person name="Land M."/>
            <person name="Hauser L."/>
            <person name="Kyrpides N.C."/>
            <person name="Ivanova N."/>
            <person name="Goker M."/>
            <person name="Woyke T."/>
            <person name="Wu Q.L."/>
            <person name="Pockl M."/>
            <person name="Hahn M.W."/>
            <person name="Klenk H.P."/>
        </authorList>
    </citation>
    <scope>NUCLEOTIDE SEQUENCE [LARGE SCALE GENOMIC DNA]</scope>
    <source>
        <strain>DSM 18221 / CIP 109841 / QLW-P1DMWA-1</strain>
    </source>
</reference>
<accession>A4SX83</accession>
<proteinExistence type="inferred from homology"/>
<protein>
    <recommendedName>
        <fullName evidence="1">Adenine phosphoribosyltransferase</fullName>
        <shortName evidence="1">APRT</shortName>
        <ecNumber evidence="1">2.4.2.7</ecNumber>
    </recommendedName>
</protein>
<gene>
    <name evidence="1" type="primary">apt</name>
    <name type="ordered locus">Pnuc_0881</name>
</gene>
<organism>
    <name type="scientific">Polynucleobacter asymbioticus (strain DSM 18221 / CIP 109841 / QLW-P1DMWA-1)</name>
    <name type="common">Polynucleobacter necessarius subsp. asymbioticus</name>
    <dbReference type="NCBI Taxonomy" id="312153"/>
    <lineage>
        <taxon>Bacteria</taxon>
        <taxon>Pseudomonadati</taxon>
        <taxon>Pseudomonadota</taxon>
        <taxon>Betaproteobacteria</taxon>
        <taxon>Burkholderiales</taxon>
        <taxon>Burkholderiaceae</taxon>
        <taxon>Polynucleobacter</taxon>
    </lineage>
</organism>
<feature type="chain" id="PRO_0000329366" description="Adenine phosphoribosyltransferase">
    <location>
        <begin position="1"/>
        <end position="172"/>
    </location>
</feature>
<name>APT_POLAQ</name>
<comment type="function">
    <text evidence="1">Catalyzes a salvage reaction resulting in the formation of AMP, that is energically less costly than de novo synthesis.</text>
</comment>
<comment type="catalytic activity">
    <reaction evidence="1">
        <text>AMP + diphosphate = 5-phospho-alpha-D-ribose 1-diphosphate + adenine</text>
        <dbReference type="Rhea" id="RHEA:16609"/>
        <dbReference type="ChEBI" id="CHEBI:16708"/>
        <dbReference type="ChEBI" id="CHEBI:33019"/>
        <dbReference type="ChEBI" id="CHEBI:58017"/>
        <dbReference type="ChEBI" id="CHEBI:456215"/>
        <dbReference type="EC" id="2.4.2.7"/>
    </reaction>
</comment>
<comment type="pathway">
    <text evidence="1">Purine metabolism; AMP biosynthesis via salvage pathway; AMP from adenine: step 1/1.</text>
</comment>
<comment type="subunit">
    <text evidence="1">Homodimer.</text>
</comment>
<comment type="subcellular location">
    <subcellularLocation>
        <location evidence="1">Cytoplasm</location>
    </subcellularLocation>
</comment>
<comment type="similarity">
    <text evidence="1">Belongs to the purine/pyrimidine phosphoribosyltransferase family.</text>
</comment>